<name>RECA_PROMM</name>
<comment type="function">
    <text evidence="1">Can catalyze the hydrolysis of ATP in the presence of single-stranded DNA, the ATP-dependent uptake of single-stranded DNA by duplex DNA, and the ATP-dependent hybridization of homologous single-stranded DNAs. It interacts with LexA causing its activation and leading to its autocatalytic cleavage.</text>
</comment>
<comment type="subcellular location">
    <subcellularLocation>
        <location evidence="1">Cytoplasm</location>
    </subcellularLocation>
</comment>
<comment type="similarity">
    <text evidence="1">Belongs to the RecA family.</text>
</comment>
<sequence>MSVDVKSAQSSKSDSLQVEPRPGERDKALNLVLGQIERNFGKGSIMRLGDASRMRVETFPTGALTLDLALGGGYPKGRVVEVYGPESSGKTTLTLHAIAEVQRRGGVAAFVDAEHALDPVYAASLGVDIENLLVSQPDTGEMALEIVDQLVRSAAVDIVVVDSVAALTPRSEIEGEMGDLAVGSQARLMSQAMRKITGNIGKSGCTVIFLNQLRLKIGVTYGNPETTTGGNALKFYASVRLDIRRIQTLKRGTEEYGIRAKVKVAKNKVAPPFRIAEFDILFGRGISTLGCLLDLAEETGVVIRKGAWYSYEGDNIGQGRDNTITWLEQNSEAQEQIEVLVRQKLTEGSEVTANSMRPLAAAARTAAKKPAVSLASEAA</sequence>
<protein>
    <recommendedName>
        <fullName evidence="1">Protein RecA</fullName>
    </recommendedName>
    <alternativeName>
        <fullName evidence="1">Recombinase A</fullName>
    </alternativeName>
</protein>
<feature type="chain" id="PRO_0000122798" description="Protein RecA">
    <location>
        <begin position="1"/>
        <end position="379"/>
    </location>
</feature>
<feature type="region of interest" description="Disordered" evidence="2">
    <location>
        <begin position="1"/>
        <end position="23"/>
    </location>
</feature>
<feature type="compositionally biased region" description="Polar residues" evidence="2">
    <location>
        <begin position="7"/>
        <end position="16"/>
    </location>
</feature>
<feature type="binding site" evidence="1">
    <location>
        <begin position="84"/>
        <end position="91"/>
    </location>
    <ligand>
        <name>ATP</name>
        <dbReference type="ChEBI" id="CHEBI:30616"/>
    </ligand>
</feature>
<organism>
    <name type="scientific">Prochlorococcus marinus (strain MIT 9313)</name>
    <dbReference type="NCBI Taxonomy" id="74547"/>
    <lineage>
        <taxon>Bacteria</taxon>
        <taxon>Bacillati</taxon>
        <taxon>Cyanobacteriota</taxon>
        <taxon>Cyanophyceae</taxon>
        <taxon>Synechococcales</taxon>
        <taxon>Prochlorococcaceae</taxon>
        <taxon>Prochlorococcus</taxon>
    </lineage>
</organism>
<gene>
    <name evidence="1" type="primary">recA</name>
    <name type="ordered locus">PMT_1727</name>
</gene>
<evidence type="ECO:0000255" key="1">
    <source>
        <dbReference type="HAMAP-Rule" id="MF_00268"/>
    </source>
</evidence>
<evidence type="ECO:0000256" key="2">
    <source>
        <dbReference type="SAM" id="MobiDB-lite"/>
    </source>
</evidence>
<dbReference type="EMBL" id="BX548175">
    <property type="protein sequence ID" value="CAE21902.1"/>
    <property type="molecule type" value="Genomic_DNA"/>
</dbReference>
<dbReference type="RefSeq" id="WP_011131094.1">
    <property type="nucleotide sequence ID" value="NC_005071.1"/>
</dbReference>
<dbReference type="SMR" id="Q7V547"/>
<dbReference type="KEGG" id="pmt:PMT_1727"/>
<dbReference type="eggNOG" id="COG0468">
    <property type="taxonomic scope" value="Bacteria"/>
</dbReference>
<dbReference type="HOGENOM" id="CLU_040469_3_2_3"/>
<dbReference type="OrthoDB" id="9776733at2"/>
<dbReference type="Proteomes" id="UP000001423">
    <property type="component" value="Chromosome"/>
</dbReference>
<dbReference type="GO" id="GO:0005829">
    <property type="term" value="C:cytosol"/>
    <property type="evidence" value="ECO:0007669"/>
    <property type="project" value="TreeGrafter"/>
</dbReference>
<dbReference type="GO" id="GO:0005524">
    <property type="term" value="F:ATP binding"/>
    <property type="evidence" value="ECO:0007669"/>
    <property type="project" value="UniProtKB-UniRule"/>
</dbReference>
<dbReference type="GO" id="GO:0016887">
    <property type="term" value="F:ATP hydrolysis activity"/>
    <property type="evidence" value="ECO:0007669"/>
    <property type="project" value="InterPro"/>
</dbReference>
<dbReference type="GO" id="GO:0140664">
    <property type="term" value="F:ATP-dependent DNA damage sensor activity"/>
    <property type="evidence" value="ECO:0007669"/>
    <property type="project" value="InterPro"/>
</dbReference>
<dbReference type="GO" id="GO:0003684">
    <property type="term" value="F:damaged DNA binding"/>
    <property type="evidence" value="ECO:0007669"/>
    <property type="project" value="UniProtKB-UniRule"/>
</dbReference>
<dbReference type="GO" id="GO:0003697">
    <property type="term" value="F:single-stranded DNA binding"/>
    <property type="evidence" value="ECO:0007669"/>
    <property type="project" value="UniProtKB-UniRule"/>
</dbReference>
<dbReference type="GO" id="GO:0006310">
    <property type="term" value="P:DNA recombination"/>
    <property type="evidence" value="ECO:0007669"/>
    <property type="project" value="UniProtKB-UniRule"/>
</dbReference>
<dbReference type="GO" id="GO:0006281">
    <property type="term" value="P:DNA repair"/>
    <property type="evidence" value="ECO:0007669"/>
    <property type="project" value="UniProtKB-UniRule"/>
</dbReference>
<dbReference type="GO" id="GO:0009432">
    <property type="term" value="P:SOS response"/>
    <property type="evidence" value="ECO:0007669"/>
    <property type="project" value="UniProtKB-UniRule"/>
</dbReference>
<dbReference type="CDD" id="cd00983">
    <property type="entry name" value="RecA"/>
    <property type="match status" value="1"/>
</dbReference>
<dbReference type="FunFam" id="3.40.50.300:FF:000087">
    <property type="entry name" value="Recombinase RecA"/>
    <property type="match status" value="1"/>
</dbReference>
<dbReference type="Gene3D" id="3.40.50.300">
    <property type="entry name" value="P-loop containing nucleotide triphosphate hydrolases"/>
    <property type="match status" value="1"/>
</dbReference>
<dbReference type="HAMAP" id="MF_00268">
    <property type="entry name" value="RecA"/>
    <property type="match status" value="1"/>
</dbReference>
<dbReference type="InterPro" id="IPR003593">
    <property type="entry name" value="AAA+_ATPase"/>
</dbReference>
<dbReference type="InterPro" id="IPR013765">
    <property type="entry name" value="DNA_recomb/repair_RecA"/>
</dbReference>
<dbReference type="InterPro" id="IPR020584">
    <property type="entry name" value="DNA_recomb/repair_RecA_CS"/>
</dbReference>
<dbReference type="InterPro" id="IPR027417">
    <property type="entry name" value="P-loop_NTPase"/>
</dbReference>
<dbReference type="InterPro" id="IPR049261">
    <property type="entry name" value="RecA-like_C"/>
</dbReference>
<dbReference type="InterPro" id="IPR049428">
    <property type="entry name" value="RecA-like_N"/>
</dbReference>
<dbReference type="InterPro" id="IPR020588">
    <property type="entry name" value="RecA_ATP-bd"/>
</dbReference>
<dbReference type="InterPro" id="IPR023400">
    <property type="entry name" value="RecA_C_sf"/>
</dbReference>
<dbReference type="InterPro" id="IPR020587">
    <property type="entry name" value="RecA_monomer-monomer_interface"/>
</dbReference>
<dbReference type="NCBIfam" id="TIGR02012">
    <property type="entry name" value="tigrfam_recA"/>
    <property type="match status" value="1"/>
</dbReference>
<dbReference type="PANTHER" id="PTHR45900:SF1">
    <property type="entry name" value="MITOCHONDRIAL DNA REPAIR PROTEIN RECA HOMOLOG-RELATED"/>
    <property type="match status" value="1"/>
</dbReference>
<dbReference type="PANTHER" id="PTHR45900">
    <property type="entry name" value="RECA"/>
    <property type="match status" value="1"/>
</dbReference>
<dbReference type="Pfam" id="PF00154">
    <property type="entry name" value="RecA"/>
    <property type="match status" value="1"/>
</dbReference>
<dbReference type="Pfam" id="PF21096">
    <property type="entry name" value="RecA_C"/>
    <property type="match status" value="1"/>
</dbReference>
<dbReference type="PRINTS" id="PR00142">
    <property type="entry name" value="RECA"/>
</dbReference>
<dbReference type="SMART" id="SM00382">
    <property type="entry name" value="AAA"/>
    <property type="match status" value="1"/>
</dbReference>
<dbReference type="SUPFAM" id="SSF52540">
    <property type="entry name" value="P-loop containing nucleoside triphosphate hydrolases"/>
    <property type="match status" value="1"/>
</dbReference>
<dbReference type="SUPFAM" id="SSF54752">
    <property type="entry name" value="RecA protein, C-terminal domain"/>
    <property type="match status" value="1"/>
</dbReference>
<dbReference type="PROSITE" id="PS00321">
    <property type="entry name" value="RECA_1"/>
    <property type="match status" value="1"/>
</dbReference>
<dbReference type="PROSITE" id="PS50162">
    <property type="entry name" value="RECA_2"/>
    <property type="match status" value="1"/>
</dbReference>
<dbReference type="PROSITE" id="PS50163">
    <property type="entry name" value="RECA_3"/>
    <property type="match status" value="1"/>
</dbReference>
<reference key="1">
    <citation type="journal article" date="2003" name="Nature">
        <title>Genome divergence in two Prochlorococcus ecotypes reflects oceanic niche differentiation.</title>
        <authorList>
            <person name="Rocap G."/>
            <person name="Larimer F.W."/>
            <person name="Lamerdin J.E."/>
            <person name="Malfatti S."/>
            <person name="Chain P."/>
            <person name="Ahlgren N.A."/>
            <person name="Arellano A."/>
            <person name="Coleman M."/>
            <person name="Hauser L."/>
            <person name="Hess W.R."/>
            <person name="Johnson Z.I."/>
            <person name="Land M.L."/>
            <person name="Lindell D."/>
            <person name="Post A.F."/>
            <person name="Regala W."/>
            <person name="Shah M."/>
            <person name="Shaw S.L."/>
            <person name="Steglich C."/>
            <person name="Sullivan M.B."/>
            <person name="Ting C.S."/>
            <person name="Tolonen A."/>
            <person name="Webb E.A."/>
            <person name="Zinser E.R."/>
            <person name="Chisholm S.W."/>
        </authorList>
    </citation>
    <scope>NUCLEOTIDE SEQUENCE [LARGE SCALE GENOMIC DNA]</scope>
    <source>
        <strain>MIT 9313</strain>
    </source>
</reference>
<keyword id="KW-0067">ATP-binding</keyword>
<keyword id="KW-0963">Cytoplasm</keyword>
<keyword id="KW-0227">DNA damage</keyword>
<keyword id="KW-0233">DNA recombination</keyword>
<keyword id="KW-0234">DNA repair</keyword>
<keyword id="KW-0238">DNA-binding</keyword>
<keyword id="KW-0547">Nucleotide-binding</keyword>
<keyword id="KW-1185">Reference proteome</keyword>
<keyword id="KW-0742">SOS response</keyword>
<accession>Q7V547</accession>
<proteinExistence type="inferred from homology"/>